<evidence type="ECO:0000269" key="1">
    <source>
    </source>
</evidence>
<evidence type="ECO:0000269" key="2">
    <source>
    </source>
</evidence>
<evidence type="ECO:0000269" key="3">
    <source>
    </source>
</evidence>
<evidence type="ECO:0000269" key="4">
    <source>
    </source>
</evidence>
<evidence type="ECO:0000303" key="5">
    <source>
    </source>
</evidence>
<evidence type="ECO:0000305" key="6"/>
<evidence type="ECO:0007829" key="7">
    <source>
        <dbReference type="PDB" id="1HQI"/>
    </source>
</evidence>
<feature type="initiator methionine" description="Removed" evidence="1">
    <location>
        <position position="1"/>
    </location>
</feature>
<feature type="chain" id="PRO_0000079943" description="Phenol 2-monooxygenase, stimulatory component DmpM">
    <location>
        <begin position="2"/>
        <end position="90"/>
    </location>
</feature>
<feature type="strand" evidence="7">
    <location>
        <begin position="8"/>
        <end position="10"/>
    </location>
</feature>
<feature type="helix" evidence="7">
    <location>
        <begin position="14"/>
        <end position="25"/>
    </location>
</feature>
<feature type="strand" evidence="7">
    <location>
        <begin position="26"/>
        <end position="28"/>
    </location>
</feature>
<feature type="strand" evidence="7">
    <location>
        <begin position="43"/>
        <end position="48"/>
    </location>
</feature>
<feature type="helix" evidence="7">
    <location>
        <begin position="50"/>
        <end position="58"/>
    </location>
</feature>
<feature type="helix" evidence="7">
    <location>
        <begin position="60"/>
        <end position="62"/>
    </location>
</feature>
<feature type="helix" evidence="7">
    <location>
        <begin position="63"/>
        <end position="68"/>
    </location>
</feature>
<feature type="strand" evidence="7">
    <location>
        <begin position="69"/>
        <end position="72"/>
    </location>
</feature>
<feature type="strand" evidence="7">
    <location>
        <begin position="84"/>
        <end position="88"/>
    </location>
</feature>
<accession>P19731</accession>
<protein>
    <recommendedName>
        <fullName evidence="6">Phenol 2-monooxygenase, stimulatory component DmpM</fullName>
        <ecNumber evidence="4">1.14.13.244</ecNumber>
    </recommendedName>
    <alternativeName>
        <fullName>Phenol 2-monooxygenase P2 component</fullName>
    </alternativeName>
    <alternativeName>
        <fullName>Phenol hydroxylase P2 protein</fullName>
    </alternativeName>
</protein>
<gene>
    <name evidence="5" type="primary">dmpM</name>
    <name type="synonym">pheA3</name>
</gene>
<keyword id="KW-0002">3D-structure</keyword>
<keyword id="KW-0058">Aromatic hydrocarbons catabolism</keyword>
<keyword id="KW-0503">Monooxygenase</keyword>
<keyword id="KW-0520">NAD</keyword>
<keyword id="KW-0560">Oxidoreductase</keyword>
<keyword id="KW-0614">Plasmid</keyword>
<organism>
    <name type="scientific">Pseudomonas sp. (strain CF600)</name>
    <dbReference type="NCBI Taxonomy" id="79676"/>
    <lineage>
        <taxon>Bacteria</taxon>
        <taxon>Pseudomonadati</taxon>
        <taxon>Pseudomonadota</taxon>
    </lineage>
</organism>
<sequence length="90" mass="10491">MSSLVYIAFQDNDNARYVVEAIIQDNPHAVVQHHPAMIRIEAEKRLEIRRETVEENLGRAWDVQEMLVDVITIGGNVDEDDDRFVLEWKN</sequence>
<name>DMPM_PSEUF</name>
<comment type="function">
    <text evidence="1 2 3 4">Part of a multicomponent enzyme which catalyzes the degradation of phenol and some of its methylated derivatives (PubMed:2254259). DmpM is a regulatory subunit that stimulates the phenol hydroxylase activity of the complex (PubMed:10451366, PubMed:12186554). The steady-state rate of phenol hydroxylase turnover is dependent on the DmpM concentration, with a maximum observed rate at about 1.5 DmpM per oxygenase monomer. Higher concentrations of DmpM inhibit phenol hydroxylase activity (PubMed:12186554). May act by altering the redox potential of the oxygenase (PubMed:12186554). Required for growth on phenol and for in vitro phenol hydroxylase activity (PubMed:2254258, PubMed:2254259).</text>
</comment>
<comment type="catalytic activity">
    <reaction evidence="4">
        <text>phenol + NADH + O2 + H(+) = catechol + NAD(+) + H2O</text>
        <dbReference type="Rhea" id="RHEA:57952"/>
        <dbReference type="ChEBI" id="CHEBI:15377"/>
        <dbReference type="ChEBI" id="CHEBI:15378"/>
        <dbReference type="ChEBI" id="CHEBI:15379"/>
        <dbReference type="ChEBI" id="CHEBI:15882"/>
        <dbReference type="ChEBI" id="CHEBI:18135"/>
        <dbReference type="ChEBI" id="CHEBI:57540"/>
        <dbReference type="ChEBI" id="CHEBI:57945"/>
        <dbReference type="EC" id="1.14.13.244"/>
    </reaction>
    <physiologicalReaction direction="left-to-right" evidence="4">
        <dbReference type="Rhea" id="RHEA:57953"/>
    </physiologicalReaction>
</comment>
<comment type="pathway">
    <text evidence="3">Aromatic compound metabolism; phenol degradation.</text>
</comment>
<comment type="subunit">
    <text evidence="1 4">Active as a monomer (PubMed:10451366). Formation of dimers inactivates the protein (PubMed:10451366). The multicomponent enzyme phenol hydroxylase is formed by DmpL (P1 component), DmpM (P2 component), DmpN (P3 component), DmpO (P4 component) and DmpP (P5 component) (PubMed:2254259).</text>
</comment>
<comment type="mass spectrometry" mass="10361.0" method="Electrospray" evidence="1"/>
<comment type="disruption phenotype">
    <text evidence="3">Cells lacking this gene cannot grow on phenol.</text>
</comment>
<comment type="similarity">
    <text evidence="6">Belongs to the TmoD/XamoD family.</text>
</comment>
<dbReference type="EC" id="1.14.13.244" evidence="4"/>
<dbReference type="EMBL" id="M60276">
    <property type="protein sequence ID" value="AAA25941.1"/>
    <property type="molecule type" value="Genomic_DNA"/>
</dbReference>
<dbReference type="EMBL" id="D28864">
    <property type="protein sequence ID" value="BAA06016.1"/>
    <property type="molecule type" value="Genomic_DNA"/>
</dbReference>
<dbReference type="PDB" id="1HQI">
    <property type="method" value="NMR"/>
    <property type="chains" value="A=1-90"/>
</dbReference>
<dbReference type="PDBsum" id="1HQI"/>
<dbReference type="SMR" id="P19731"/>
<dbReference type="BioCyc" id="MetaCyc:MONOMER-12796"/>
<dbReference type="BRENDA" id="1.14.13.244">
    <property type="organism ID" value="16277"/>
</dbReference>
<dbReference type="UniPathway" id="UPA00728"/>
<dbReference type="EvolutionaryTrace" id="P19731"/>
<dbReference type="GO" id="GO:0018662">
    <property type="term" value="F:phenol 2-monooxygenase activity"/>
    <property type="evidence" value="ECO:0007669"/>
    <property type="project" value="UniProtKB-EC"/>
</dbReference>
<dbReference type="GO" id="GO:0019336">
    <property type="term" value="P:phenol-containing compound catabolic process"/>
    <property type="evidence" value="ECO:0007669"/>
    <property type="project" value="UniProtKB-UniPathway"/>
</dbReference>
<dbReference type="Gene3D" id="3.90.56.10">
    <property type="entry name" value="Monooxygenase component MmoB/DmpM"/>
    <property type="match status" value="1"/>
</dbReference>
<dbReference type="InterPro" id="IPR003454">
    <property type="entry name" value="MOase_MmoB_DmpM"/>
</dbReference>
<dbReference type="InterPro" id="IPR036889">
    <property type="entry name" value="mOase_MmoB_DmpM_sf"/>
</dbReference>
<dbReference type="Pfam" id="PF02406">
    <property type="entry name" value="MmoB_DmpM"/>
    <property type="match status" value="1"/>
</dbReference>
<dbReference type="SUPFAM" id="SSF56029">
    <property type="entry name" value="Monooxygenase (hydroxylase) regulatory protein"/>
    <property type="match status" value="1"/>
</dbReference>
<proteinExistence type="evidence at protein level"/>
<reference key="1">
    <citation type="journal article" date="1990" name="J. Bacteriol.">
        <title>Complete nucleotide sequence and polypeptide analysis of multicomponent phenol hydroxylase from Pseudomonas sp. strain CF600.</title>
        <authorList>
            <person name="Nordlund I."/>
            <person name="Powlowski J."/>
            <person name="Shingler V."/>
        </authorList>
    </citation>
    <scope>NUCLEOTIDE SEQUENCE [GENOMIC DNA]</scope>
    <scope>FUNCTION</scope>
    <scope>PATHWAY</scope>
    <scope>DISRUPTION PHENOTYPE</scope>
    <source>
        <strain>CF600</strain>
    </source>
</reference>
<reference key="2">
    <citation type="submission" date="1994-03" db="EMBL/GenBank/DDBJ databases">
        <authorList>
            <person name="Takeo M."/>
            <person name="Maeda Y."/>
            <person name="Okada H."/>
            <person name="Miyama K."/>
            <person name="Mori K."/>
            <person name="Ike M."/>
            <person name="Fujita M."/>
        </authorList>
    </citation>
    <scope>NUCLEOTIDE SEQUENCE [GENOMIC DNA]</scope>
    <source>
        <strain>BH</strain>
    </source>
</reference>
<reference key="3">
    <citation type="journal article" date="1990" name="J. Bacteriol.">
        <title>In vitro analysis of polypeptide requirements of multicomponent phenol hydroxylase from Pseudomonas sp. strain CF600.</title>
        <authorList>
            <person name="Powlowski J."/>
            <person name="Shingler V."/>
        </authorList>
    </citation>
    <scope>FUNCTION</scope>
    <scope>CATALYTIC ACTIVITY</scope>
    <scope>SUBUNIT</scope>
    <source>
        <strain>CF600</strain>
    </source>
</reference>
<reference key="4">
    <citation type="journal article" date="1999" name="Biochemistry">
        <title>Characterization of active and inactive forms of the phenol hydroxylase stimulatory protein DmpM.</title>
        <authorList>
            <person name="Cadieux E."/>
            <person name="Powlowski J."/>
        </authorList>
    </citation>
    <scope>FUNCTION</scope>
    <scope>SUBUNIT</scope>
    <scope>MASS SPECTROMETRY</scope>
    <source>
        <strain>CF600</strain>
    </source>
</reference>
<reference key="5">
    <citation type="journal article" date="2002" name="Biochemistry">
        <title>Biochemical, Moessbauer, and EPR studies of the diiron cluster of phenol hydroxylase from Pseudomonas sp. strain CF 600.</title>
        <authorList>
            <person name="Cadieux E."/>
            <person name="Vrajmasu V."/>
            <person name="Achim C."/>
            <person name="Powlowski J."/>
            <person name="Muenck E."/>
        </authorList>
    </citation>
    <scope>FUNCTION</scope>
    <source>
        <strain>CF600</strain>
    </source>
</reference>
<reference key="6">
    <citation type="journal article" date="1997" name="Biochemistry">
        <title>Solution structure of phenol hydroxylase protein component P2 determined by NMR spectroscopy.</title>
        <authorList>
            <person name="Qian H."/>
            <person name="Edlund U."/>
            <person name="Powlowski J."/>
            <person name="Shingler V."/>
            <person name="Sethson I."/>
        </authorList>
    </citation>
    <scope>STRUCTURE BY NMR</scope>
</reference>
<geneLocation type="plasmid">
    <name>pVI150</name>
</geneLocation>